<proteinExistence type="inferred from homology"/>
<protein>
    <recommendedName>
        <fullName>ATP phosphoribosyltransferase regulatory subunit</fullName>
    </recommendedName>
</protein>
<comment type="function">
    <text evidence="1">Required for the first step of histidine biosynthesis. May allow the feedback regulation of ATP phosphoribosyltransferase activity by histidine (By similarity).</text>
</comment>
<comment type="pathway">
    <text>Amino-acid biosynthesis; L-histidine biosynthesis; L-histidine from 5-phospho-alpha-D-ribose 1-diphosphate: step 1/9.</text>
</comment>
<comment type="subunit">
    <text evidence="1">Heteromultimer composed of HisG and HisZ subunits.</text>
</comment>
<comment type="subcellular location">
    <subcellularLocation>
        <location evidence="1">Cytoplasm</location>
    </subcellularLocation>
</comment>
<comment type="miscellaneous">
    <text>This function is generally fulfilled by the C-terminal part of HisG, which is missing in some bacteria such as this one.</text>
</comment>
<comment type="similarity">
    <text evidence="2">Belongs to the class-II aminoacyl-tRNA synthetase family. HisZ subfamily.</text>
</comment>
<feature type="chain" id="PRO_0000171037" description="ATP phosphoribosyltransferase regulatory subunit">
    <location>
        <begin position="1"/>
        <end position="280"/>
    </location>
</feature>
<organism>
    <name type="scientific">Helicobacter hepaticus (strain ATCC 51449 / 3B1)</name>
    <dbReference type="NCBI Taxonomy" id="235279"/>
    <lineage>
        <taxon>Bacteria</taxon>
        <taxon>Pseudomonadati</taxon>
        <taxon>Campylobacterota</taxon>
        <taxon>Epsilonproteobacteria</taxon>
        <taxon>Campylobacterales</taxon>
        <taxon>Helicobacteraceae</taxon>
        <taxon>Helicobacter</taxon>
    </lineage>
</organism>
<name>HISZ_HELHP</name>
<evidence type="ECO:0000250" key="1"/>
<evidence type="ECO:0000305" key="2"/>
<gene>
    <name type="primary">hisZ</name>
    <name type="ordered locus">HH_0955</name>
</gene>
<accession>Q7VHL1</accession>
<dbReference type="EMBL" id="AE017125">
    <property type="protein sequence ID" value="AAP77552.1"/>
    <property type="molecule type" value="Genomic_DNA"/>
</dbReference>
<dbReference type="RefSeq" id="WP_011115795.1">
    <property type="nucleotide sequence ID" value="NC_004917.1"/>
</dbReference>
<dbReference type="SMR" id="Q7VHL1"/>
<dbReference type="STRING" id="235279.HH_0955"/>
<dbReference type="KEGG" id="hhe:HH_0955"/>
<dbReference type="eggNOG" id="COG3705">
    <property type="taxonomic scope" value="Bacteria"/>
</dbReference>
<dbReference type="HOGENOM" id="CLU_939330_0_0_7"/>
<dbReference type="OrthoDB" id="5342252at2"/>
<dbReference type="UniPathway" id="UPA00031">
    <property type="reaction ID" value="UER00006"/>
</dbReference>
<dbReference type="Proteomes" id="UP000002495">
    <property type="component" value="Chromosome"/>
</dbReference>
<dbReference type="GO" id="GO:0005737">
    <property type="term" value="C:cytoplasm"/>
    <property type="evidence" value="ECO:0007669"/>
    <property type="project" value="UniProtKB-SubCell"/>
</dbReference>
<dbReference type="GO" id="GO:0004821">
    <property type="term" value="F:histidine-tRNA ligase activity"/>
    <property type="evidence" value="ECO:0007669"/>
    <property type="project" value="TreeGrafter"/>
</dbReference>
<dbReference type="GO" id="GO:0006427">
    <property type="term" value="P:histidyl-tRNA aminoacylation"/>
    <property type="evidence" value="ECO:0007669"/>
    <property type="project" value="TreeGrafter"/>
</dbReference>
<dbReference type="GO" id="GO:0000105">
    <property type="term" value="P:L-histidine biosynthetic process"/>
    <property type="evidence" value="ECO:0007669"/>
    <property type="project" value="UniProtKB-UniPathway"/>
</dbReference>
<dbReference type="Gene3D" id="3.30.930.10">
    <property type="entry name" value="Bira Bifunctional Protein, Domain 2"/>
    <property type="match status" value="1"/>
</dbReference>
<dbReference type="InterPro" id="IPR045864">
    <property type="entry name" value="aa-tRNA-synth_II/BPL/LPL"/>
</dbReference>
<dbReference type="InterPro" id="IPR041715">
    <property type="entry name" value="HisRS-like_core"/>
</dbReference>
<dbReference type="InterPro" id="IPR004516">
    <property type="entry name" value="HisRS/HisZ"/>
</dbReference>
<dbReference type="NCBIfam" id="NF008946">
    <property type="entry name" value="PRK12293.1"/>
    <property type="match status" value="1"/>
</dbReference>
<dbReference type="PANTHER" id="PTHR43707:SF1">
    <property type="entry name" value="HISTIDINE--TRNA LIGASE, MITOCHONDRIAL-RELATED"/>
    <property type="match status" value="1"/>
</dbReference>
<dbReference type="PANTHER" id="PTHR43707">
    <property type="entry name" value="HISTIDYL-TRNA SYNTHETASE"/>
    <property type="match status" value="1"/>
</dbReference>
<dbReference type="Pfam" id="PF13393">
    <property type="entry name" value="tRNA-synt_His"/>
    <property type="match status" value="1"/>
</dbReference>
<dbReference type="SUPFAM" id="SSF55681">
    <property type="entry name" value="Class II aaRS and biotin synthetases"/>
    <property type="match status" value="1"/>
</dbReference>
<reference key="1">
    <citation type="journal article" date="2003" name="Proc. Natl. Acad. Sci. U.S.A.">
        <title>The complete genome sequence of the carcinogenic bacterium Helicobacter hepaticus.</title>
        <authorList>
            <person name="Suerbaum S."/>
            <person name="Josenhans C."/>
            <person name="Sterzenbach T."/>
            <person name="Drescher B."/>
            <person name="Brandt P."/>
            <person name="Bell M."/>
            <person name="Droege M."/>
            <person name="Fartmann B."/>
            <person name="Fischer H.-P."/>
            <person name="Ge Z."/>
            <person name="Hoerster A."/>
            <person name="Holland R."/>
            <person name="Klein K."/>
            <person name="Koenig J."/>
            <person name="Macko L."/>
            <person name="Mendz G.L."/>
            <person name="Nyakatura G."/>
            <person name="Schauer D.B."/>
            <person name="Shen Z."/>
            <person name="Weber J."/>
            <person name="Frosch M."/>
            <person name="Fox J.G."/>
        </authorList>
    </citation>
    <scope>NUCLEOTIDE SEQUENCE [LARGE SCALE GENOMIC DNA]</scope>
    <source>
        <strain>ATCC 51449 / 3B1</strain>
    </source>
</reference>
<sequence length="280" mass="32195">MILEHELPQGSKLYFDMSARLKRDIESCAIKAFYENDYREIVTPSFAFLEHQGDMFNREIVRLSSENNHQIGLRYDTTLDAMRIVTKRIMRSSTHKKWFYIQPVFSYPTTEIHQIGAEYLGGESLSPVMCLGVSILQTLNLAPYLQISNMKIPFLCAKHSDVDIEVFALQNVGKLLQMEGYMADLVHIKTKQDLQKAILSAPAFLKEELERLLECASYCEYEKTIFSPLLFAPSPYYEDLFFRMFVGNSTLLQGGKYSVEEQFSCGFAIYTDEVVECLLS</sequence>
<keyword id="KW-0028">Amino-acid biosynthesis</keyword>
<keyword id="KW-0963">Cytoplasm</keyword>
<keyword id="KW-0368">Histidine biosynthesis</keyword>
<keyword id="KW-1185">Reference proteome</keyword>